<dbReference type="EC" id="2.4.2.8" evidence="1"/>
<dbReference type="EMBL" id="CP002737">
    <property type="protein sequence ID" value="AEF95917.1"/>
    <property type="molecule type" value="Genomic_DNA"/>
</dbReference>
<dbReference type="RefSeq" id="WP_013798526.1">
    <property type="nucleotide sequence ID" value="NC_015562.1"/>
</dbReference>
<dbReference type="SMR" id="F6BB32"/>
<dbReference type="STRING" id="880724.Metig_0361"/>
<dbReference type="GeneID" id="10643198"/>
<dbReference type="KEGG" id="mig:Metig_0361"/>
<dbReference type="HOGENOM" id="CLU_126376_0_0_2"/>
<dbReference type="OrthoDB" id="8323at2157"/>
<dbReference type="UniPathway" id="UPA00591">
    <property type="reaction ID" value="UER00648"/>
</dbReference>
<dbReference type="Proteomes" id="UP000009227">
    <property type="component" value="Chromosome"/>
</dbReference>
<dbReference type="GO" id="GO:0005737">
    <property type="term" value="C:cytoplasm"/>
    <property type="evidence" value="ECO:0007669"/>
    <property type="project" value="UniProtKB-SubCell"/>
</dbReference>
<dbReference type="GO" id="GO:0052657">
    <property type="term" value="F:guanine phosphoribosyltransferase activity"/>
    <property type="evidence" value="ECO:0007669"/>
    <property type="project" value="RHEA"/>
</dbReference>
<dbReference type="GO" id="GO:0004422">
    <property type="term" value="F:hypoxanthine phosphoribosyltransferase activity"/>
    <property type="evidence" value="ECO:0007669"/>
    <property type="project" value="UniProtKB-UniRule"/>
</dbReference>
<dbReference type="GO" id="GO:0032264">
    <property type="term" value="P:IMP salvage"/>
    <property type="evidence" value="ECO:0007669"/>
    <property type="project" value="UniProtKB-UniRule"/>
</dbReference>
<dbReference type="GO" id="GO:0006166">
    <property type="term" value="P:purine ribonucleoside salvage"/>
    <property type="evidence" value="ECO:0007669"/>
    <property type="project" value="UniProtKB-KW"/>
</dbReference>
<dbReference type="CDD" id="cd06223">
    <property type="entry name" value="PRTases_typeI"/>
    <property type="match status" value="1"/>
</dbReference>
<dbReference type="Gene3D" id="3.40.50.2020">
    <property type="match status" value="1"/>
</dbReference>
<dbReference type="HAMAP" id="MF_01467">
    <property type="entry name" value="Hypx_phosphoribosyltr"/>
    <property type="match status" value="1"/>
</dbReference>
<dbReference type="InterPro" id="IPR026597">
    <property type="entry name" value="HGPRTase-like"/>
</dbReference>
<dbReference type="InterPro" id="IPR000836">
    <property type="entry name" value="PRibTrfase_dom"/>
</dbReference>
<dbReference type="InterPro" id="IPR029057">
    <property type="entry name" value="PRTase-like"/>
</dbReference>
<dbReference type="InterPro" id="IPR050118">
    <property type="entry name" value="Pur/Pyrimidine_PRTase"/>
</dbReference>
<dbReference type="NCBIfam" id="NF040646">
    <property type="entry name" value="HPT_Archaea"/>
    <property type="match status" value="1"/>
</dbReference>
<dbReference type="NCBIfam" id="NF002635">
    <property type="entry name" value="PRK02304.1-4"/>
    <property type="match status" value="1"/>
</dbReference>
<dbReference type="PANTHER" id="PTHR43864">
    <property type="entry name" value="HYPOXANTHINE/GUANINE PHOSPHORIBOSYLTRANSFERASE"/>
    <property type="match status" value="1"/>
</dbReference>
<dbReference type="PANTHER" id="PTHR43864:SF1">
    <property type="entry name" value="XANTHINE PHOSPHORIBOSYLTRANSFERASE"/>
    <property type="match status" value="1"/>
</dbReference>
<dbReference type="Pfam" id="PF00156">
    <property type="entry name" value="Pribosyltran"/>
    <property type="match status" value="1"/>
</dbReference>
<dbReference type="SUPFAM" id="SSF53271">
    <property type="entry name" value="PRTase-like"/>
    <property type="match status" value="1"/>
</dbReference>
<dbReference type="PROSITE" id="PS00103">
    <property type="entry name" value="PUR_PYR_PR_TRANSFER"/>
    <property type="match status" value="1"/>
</dbReference>
<comment type="function">
    <text evidence="1">Catalyzes a salvage reaction resulting in the formation of IMP that is energically less costly than de novo synthesis.</text>
</comment>
<comment type="catalytic activity">
    <reaction evidence="1">
        <text>IMP + diphosphate = hypoxanthine + 5-phospho-alpha-D-ribose 1-diphosphate</text>
        <dbReference type="Rhea" id="RHEA:17973"/>
        <dbReference type="ChEBI" id="CHEBI:17368"/>
        <dbReference type="ChEBI" id="CHEBI:33019"/>
        <dbReference type="ChEBI" id="CHEBI:58017"/>
        <dbReference type="ChEBI" id="CHEBI:58053"/>
        <dbReference type="EC" id="2.4.2.8"/>
    </reaction>
</comment>
<comment type="catalytic activity">
    <reaction evidence="1">
        <text>GMP + diphosphate = guanine + 5-phospho-alpha-D-ribose 1-diphosphate</text>
        <dbReference type="Rhea" id="RHEA:25424"/>
        <dbReference type="ChEBI" id="CHEBI:16235"/>
        <dbReference type="ChEBI" id="CHEBI:33019"/>
        <dbReference type="ChEBI" id="CHEBI:58017"/>
        <dbReference type="ChEBI" id="CHEBI:58115"/>
        <dbReference type="EC" id="2.4.2.8"/>
    </reaction>
</comment>
<comment type="pathway">
    <text evidence="1">Purine metabolism; IMP biosynthesis via salvage pathway; IMP from hypoxanthine: step 1/1.</text>
</comment>
<comment type="subunit">
    <text evidence="1">Homodimer.</text>
</comment>
<comment type="subcellular location">
    <subcellularLocation>
        <location evidence="1">Cytoplasm</location>
    </subcellularLocation>
</comment>
<comment type="similarity">
    <text evidence="1">Belongs to the purine/pyrimidine phosphoribosyltransferase family. Archaeal HPRT subfamily.</text>
</comment>
<proteinExistence type="inferred from homology"/>
<accession>F6BB32</accession>
<keyword id="KW-0963">Cytoplasm</keyword>
<keyword id="KW-0328">Glycosyltransferase</keyword>
<keyword id="KW-0660">Purine salvage</keyword>
<keyword id="KW-1185">Reference proteome</keyword>
<keyword id="KW-0808">Transferase</keyword>
<name>HPRT_METIK</name>
<organism>
    <name type="scientific">Methanotorris igneus (strain DSM 5666 / JCM 11834 / Kol 5)</name>
    <dbReference type="NCBI Taxonomy" id="880724"/>
    <lineage>
        <taxon>Archaea</taxon>
        <taxon>Methanobacteriati</taxon>
        <taxon>Methanobacteriota</taxon>
        <taxon>Methanomada group</taxon>
        <taxon>Methanococci</taxon>
        <taxon>Methanococcales</taxon>
        <taxon>Methanocaldococcaceae</taxon>
        <taxon>Methanotorris</taxon>
    </lineage>
</organism>
<gene>
    <name evidence="1" type="primary">hpt</name>
    <name type="ordered locus">Metig_0361</name>
</gene>
<reference key="1">
    <citation type="submission" date="2011-05" db="EMBL/GenBank/DDBJ databases">
        <title>Complete sequence of Methanotorris igneus Kol 5.</title>
        <authorList>
            <consortium name="US DOE Joint Genome Institute"/>
            <person name="Lucas S."/>
            <person name="Han J."/>
            <person name="Lapidus A."/>
            <person name="Cheng J.-F."/>
            <person name="Goodwin L."/>
            <person name="Pitluck S."/>
            <person name="Peters L."/>
            <person name="Mikhailova N."/>
            <person name="Chertkov O."/>
            <person name="Han C."/>
            <person name="Tapia R."/>
            <person name="Land M."/>
            <person name="Hauser L."/>
            <person name="Kyrpides N."/>
            <person name="Ivanova N."/>
            <person name="Pagani I."/>
            <person name="Sieprawska-Lupa M."/>
            <person name="Whitman W."/>
            <person name="Woyke T."/>
        </authorList>
    </citation>
    <scope>NUCLEOTIDE SEQUENCE [LARGE SCALE GENOMIC DNA]</scope>
    <source>
        <strain>DSM 5666 / JCM 11834 / Kol 5</strain>
    </source>
</reference>
<sequence>MLLEETLKSCPTVKRGDYEYFIHPISDGVPIVNPKLLREVATRIIKEVDFENIDKIVTAEAMGIPLVTTLSLYTDVPYVIMRKREYKLKGEIPVHQETGYSKGQLYLNGIEKGDRVLIVDDVISTGGTMIAIINALKKAGAEIKDIVCVIERGEGKKIVEEKTGYKIKTLVKLDVKDGKVVIL</sequence>
<feature type="chain" id="PRO_0000415487" description="Hypoxanthine/guanine phosphoribosyltransferase">
    <location>
        <begin position="1"/>
        <end position="183"/>
    </location>
</feature>
<protein>
    <recommendedName>
        <fullName evidence="1">Hypoxanthine/guanine phosphoribosyltransferase</fullName>
        <shortName evidence="1">HGPRTase</shortName>
        <ecNumber evidence="1">2.4.2.8</ecNumber>
    </recommendedName>
</protein>
<evidence type="ECO:0000255" key="1">
    <source>
        <dbReference type="HAMAP-Rule" id="MF_01467"/>
    </source>
</evidence>